<name>FAPR_STAAM</name>
<organism>
    <name type="scientific">Staphylococcus aureus (strain Mu50 / ATCC 700699)</name>
    <dbReference type="NCBI Taxonomy" id="158878"/>
    <lineage>
        <taxon>Bacteria</taxon>
        <taxon>Bacillati</taxon>
        <taxon>Bacillota</taxon>
        <taxon>Bacilli</taxon>
        <taxon>Bacillales</taxon>
        <taxon>Staphylococcaceae</taxon>
        <taxon>Staphylococcus</taxon>
    </lineage>
</organism>
<dbReference type="EMBL" id="BA000017">
    <property type="protein sequence ID" value="BAB57390.1"/>
    <property type="molecule type" value="Genomic_DNA"/>
</dbReference>
<dbReference type="SMR" id="P67619"/>
<dbReference type="KEGG" id="sav:SAV1228"/>
<dbReference type="HOGENOM" id="CLU_095708_0_0_9"/>
<dbReference type="PhylomeDB" id="P67619"/>
<dbReference type="Proteomes" id="UP000002481">
    <property type="component" value="Chromosome"/>
</dbReference>
<dbReference type="GO" id="GO:0003677">
    <property type="term" value="F:DNA binding"/>
    <property type="evidence" value="ECO:0007669"/>
    <property type="project" value="UniProtKB-KW"/>
</dbReference>
<dbReference type="GO" id="GO:0003700">
    <property type="term" value="F:DNA-binding transcription factor activity"/>
    <property type="evidence" value="ECO:0007669"/>
    <property type="project" value="UniProtKB-UniRule"/>
</dbReference>
<dbReference type="GO" id="GO:0006633">
    <property type="term" value="P:fatty acid biosynthetic process"/>
    <property type="evidence" value="ECO:0007669"/>
    <property type="project" value="UniProtKB-KW"/>
</dbReference>
<dbReference type="GO" id="GO:0045892">
    <property type="term" value="P:negative regulation of DNA-templated transcription"/>
    <property type="evidence" value="ECO:0007669"/>
    <property type="project" value="UniProtKB-UniRule"/>
</dbReference>
<dbReference type="GO" id="GO:0045717">
    <property type="term" value="P:negative regulation of fatty acid biosynthetic process"/>
    <property type="evidence" value="ECO:0007669"/>
    <property type="project" value="UniProtKB-UniRule"/>
</dbReference>
<dbReference type="CDD" id="cd03440">
    <property type="entry name" value="hot_dog"/>
    <property type="match status" value="1"/>
</dbReference>
<dbReference type="Gene3D" id="3.10.129.10">
    <property type="entry name" value="Hotdog Thioesterase"/>
    <property type="match status" value="1"/>
</dbReference>
<dbReference type="Gene3D" id="1.10.10.10">
    <property type="entry name" value="Winged helix-like DNA-binding domain superfamily/Winged helix DNA-binding domain"/>
    <property type="match status" value="1"/>
</dbReference>
<dbReference type="HAMAP" id="MF_01814">
    <property type="entry name" value="Transcrip_fact_FapR"/>
    <property type="match status" value="1"/>
</dbReference>
<dbReference type="InterPro" id="IPR029069">
    <property type="entry name" value="HotDog_dom_sf"/>
</dbReference>
<dbReference type="InterPro" id="IPR006683">
    <property type="entry name" value="Thioestr_dom"/>
</dbReference>
<dbReference type="InterPro" id="IPR017275">
    <property type="entry name" value="Transcription_factor_FapR"/>
</dbReference>
<dbReference type="InterPro" id="IPR036388">
    <property type="entry name" value="WH-like_DNA-bd_sf"/>
</dbReference>
<dbReference type="NCBIfam" id="NF003359">
    <property type="entry name" value="PRK04424.1"/>
    <property type="match status" value="1"/>
</dbReference>
<dbReference type="Pfam" id="PF03061">
    <property type="entry name" value="4HBT"/>
    <property type="match status" value="1"/>
</dbReference>
<dbReference type="PIRSF" id="PIRSF037733">
    <property type="entry name" value="Transcription_factor_FapR"/>
    <property type="match status" value="1"/>
</dbReference>
<dbReference type="SUPFAM" id="SSF54637">
    <property type="entry name" value="Thioesterase/thiol ester dehydrase-isomerase"/>
    <property type="match status" value="1"/>
</dbReference>
<keyword id="KW-0238">DNA-binding</keyword>
<keyword id="KW-0275">Fatty acid biosynthesis</keyword>
<keyword id="KW-0276">Fatty acid metabolism</keyword>
<keyword id="KW-0444">Lipid biosynthesis</keyword>
<keyword id="KW-0443">Lipid metabolism</keyword>
<keyword id="KW-0678">Repressor</keyword>
<keyword id="KW-0804">Transcription</keyword>
<keyword id="KW-0805">Transcription regulation</keyword>
<reference key="1">
    <citation type="journal article" date="2001" name="Lancet">
        <title>Whole genome sequencing of meticillin-resistant Staphylococcus aureus.</title>
        <authorList>
            <person name="Kuroda M."/>
            <person name="Ohta T."/>
            <person name="Uchiyama I."/>
            <person name="Baba T."/>
            <person name="Yuzawa H."/>
            <person name="Kobayashi I."/>
            <person name="Cui L."/>
            <person name="Oguchi A."/>
            <person name="Aoki K."/>
            <person name="Nagai Y."/>
            <person name="Lian J.-Q."/>
            <person name="Ito T."/>
            <person name="Kanamori M."/>
            <person name="Matsumaru H."/>
            <person name="Maruyama A."/>
            <person name="Murakami H."/>
            <person name="Hosoyama A."/>
            <person name="Mizutani-Ui Y."/>
            <person name="Takahashi N.K."/>
            <person name="Sawano T."/>
            <person name="Inoue R."/>
            <person name="Kaito C."/>
            <person name="Sekimizu K."/>
            <person name="Hirakawa H."/>
            <person name="Kuhara S."/>
            <person name="Goto S."/>
            <person name="Yabuzaki J."/>
            <person name="Kanehisa M."/>
            <person name="Yamashita A."/>
            <person name="Oshima K."/>
            <person name="Furuya K."/>
            <person name="Yoshino C."/>
            <person name="Shiba T."/>
            <person name="Hattori M."/>
            <person name="Ogasawara N."/>
            <person name="Hayashi H."/>
            <person name="Hiramatsu K."/>
        </authorList>
    </citation>
    <scope>NUCLEOTIDE SEQUENCE [LARGE SCALE GENOMIC DNA]</scope>
    <source>
        <strain>Mu50 / ATCC 700699</strain>
    </source>
</reference>
<proteinExistence type="inferred from homology"/>
<feature type="chain" id="PRO_0000172830" description="Transcription factor FapR">
    <location>
        <begin position="1"/>
        <end position="185"/>
    </location>
</feature>
<protein>
    <recommendedName>
        <fullName evidence="1">Transcription factor FapR</fullName>
    </recommendedName>
    <alternativeName>
        <fullName evidence="1">Fatty acid and phospholipid biosynthesis regulator</fullName>
    </alternativeName>
</protein>
<gene>
    <name evidence="1" type="primary">fapR</name>
    <name type="ordered locus">SAV1228</name>
</gene>
<evidence type="ECO:0000255" key="1">
    <source>
        <dbReference type="HAMAP-Rule" id="MF_01814"/>
    </source>
</evidence>
<sequence>MKLKKDKRREAIRQQIDSNPFITDHELSDLFQVSIQTIRLDRTYLNIPELRKRIKLVAEKNYDQISSIEEQEFIGDLIQVNPNVKAQSILDITSDSVFHKTGIARGHVLFAQANSLCVALIKQPTVLTHESSIQFIEKVKLNDTVRAEARVVNQTAKHYYVEVKSYVKHTLVFKGNFKMFYDKRG</sequence>
<accession>P67619</accession>
<accession>Q99UP0</accession>
<comment type="function">
    <text evidence="1">Transcriptional factor involved in regulation of membrane lipid biosynthesis by repressing genes involved in fatty acid and phospholipid metabolism.</text>
</comment>
<comment type="similarity">
    <text evidence="1">Belongs to the FapR family.</text>
</comment>